<keyword id="KW-0946">Virion</keyword>
<accession>Q9QAQ4</accession>
<evidence type="ECO:0000250" key="1"/>
<evidence type="ECO:0000305" key="2"/>
<reference key="1">
    <citation type="journal article" date="1998" name="Virus Genes">
        <title>Nucleotide and predicted amino acid sequences of all genes encoded by the 3' genomic portion (9.5 kb) of respiratory bovine coronaviruses and comparisons among respiratory and enteric coronaviruses.</title>
        <authorList>
            <person name="Chouljenko V.N."/>
            <person name="Kousoulas K.G."/>
            <person name="Lin X.Q."/>
            <person name="Storz J."/>
        </authorList>
    </citation>
    <scope>NUCLEOTIDE SEQUENCE [GENOMIC RNA]</scope>
    <source>
        <strain>Isolate OK-0514-3</strain>
    </source>
</reference>
<dbReference type="EMBL" id="AF058944">
    <property type="protein sequence ID" value="AAF25526.1"/>
    <property type="molecule type" value="Genomic_RNA"/>
</dbReference>
<dbReference type="GO" id="GO:0044423">
    <property type="term" value="C:virion component"/>
    <property type="evidence" value="ECO:0007669"/>
    <property type="project" value="UniProtKB-KW"/>
</dbReference>
<dbReference type="CDD" id="cd21662">
    <property type="entry name" value="embe-CoV_Protein-I_like"/>
    <property type="match status" value="1"/>
</dbReference>
<dbReference type="InterPro" id="IPR004876">
    <property type="entry name" value="Corona_nucI"/>
</dbReference>
<dbReference type="InterPro" id="IPR044311">
    <property type="entry name" value="N2-like_embe-CoV"/>
</dbReference>
<dbReference type="Pfam" id="PF03187">
    <property type="entry name" value="Corona_I"/>
    <property type="match status" value="1"/>
</dbReference>
<comment type="function">
    <text evidence="1">Structural protein that is not essential for the viral replication either in tissue culture or in its natural host.</text>
</comment>
<comment type="subcellular location">
    <subcellularLocation>
        <location evidence="1">Virion</location>
    </subcellularLocation>
</comment>
<comment type="miscellaneous">
    <text>The gene encoding this protein is included within the N gene (alternative ORF).</text>
</comment>
<comment type="similarity">
    <text evidence="2">Belongs to the coronavirus I protein family.</text>
</comment>
<organism>
    <name type="scientific">Bovine coronavirus (strain OK-0514)</name>
    <name type="common">BCoV</name>
    <name type="synonym">BCV</name>
    <dbReference type="NCBI Taxonomy" id="231432"/>
    <lineage>
        <taxon>Viruses</taxon>
        <taxon>Riboviria</taxon>
        <taxon>Orthornavirae</taxon>
        <taxon>Pisuviricota</taxon>
        <taxon>Pisoniviricetes</taxon>
        <taxon>Nidovirales</taxon>
        <taxon>Cornidovirineae</taxon>
        <taxon>Coronaviridae</taxon>
        <taxon>Orthocoronavirinae</taxon>
        <taxon>Betacoronavirus</taxon>
        <taxon>Embecovirus</taxon>
        <taxon>Betacoronavirus 1</taxon>
    </lineage>
</organism>
<protein>
    <recommendedName>
        <fullName>Protein I</fullName>
    </recommendedName>
    <alternativeName>
        <fullName>Accessory protein N2</fullName>
    </alternativeName>
    <alternativeName>
        <fullName>N internal ORF protein</fullName>
        <shortName>IORF</shortName>
    </alternativeName>
    <alternativeName>
        <fullName>Protein in nucleocapsid ORF</fullName>
    </alternativeName>
</protein>
<gene>
    <name type="primary">N</name>
    <name type="synonym">I</name>
    <name type="ORF">7b</name>
</gene>
<organismHost>
    <name type="scientific">Bos taurus</name>
    <name type="common">Bovine</name>
    <dbReference type="NCBI Taxonomy" id="9913"/>
</organismHost>
<sequence length="207" mass="22989">MASLSGPISPTNLEMFKPGVEELNPSKLLLLSNHQEGMLYPTILGSLELLSFKRERSLNLQRDKVCLLHQESQLLKLRGTGTDTTDVPLKQPMATSVNCCHDGIFTILEQDRMPKTSMAPTLTESSGSLVTRLMSIPRLTFSIGTQVAMRLFRLGFRLARYSLRVTILKAQEGLLLIPDLLHAHPVEPLVQDRAVEPILAIEPLPLV</sequence>
<name>IORF_CVBOK</name>
<proteinExistence type="inferred from homology"/>
<feature type="chain" id="PRO_0000284097" description="Protein I">
    <location>
        <begin position="1"/>
        <end position="207"/>
    </location>
</feature>